<gene>
    <name type="primary">ZBTB5</name>
    <name type="synonym">KIAA0354</name>
</gene>
<reference key="1">
    <citation type="journal article" date="1997" name="DNA Res.">
        <title>Prediction of the coding sequences of unidentified human genes. VII. The complete sequences of 100 new cDNA clones from brain which can code for large proteins in vitro.</title>
        <authorList>
            <person name="Nagase T."/>
            <person name="Ishikawa K."/>
            <person name="Nakajima D."/>
            <person name="Ohira M."/>
            <person name="Seki N."/>
            <person name="Miyajima N."/>
            <person name="Tanaka A."/>
            <person name="Kotani H."/>
            <person name="Nomura N."/>
            <person name="Ohara O."/>
        </authorList>
    </citation>
    <scope>NUCLEOTIDE SEQUENCE [LARGE SCALE MRNA]</scope>
    <source>
        <tissue>Brain</tissue>
    </source>
</reference>
<reference key="2">
    <citation type="journal article" date="2004" name="Genome Res.">
        <title>The status, quality, and expansion of the NIH full-length cDNA project: the Mammalian Gene Collection (MGC).</title>
        <authorList>
            <consortium name="The MGC Project Team"/>
        </authorList>
    </citation>
    <scope>NUCLEOTIDE SEQUENCE [LARGE SCALE MRNA]</scope>
    <source>
        <tissue>Pancreas</tissue>
    </source>
</reference>
<reference key="3">
    <citation type="journal article" date="2009" name="Sci. Signal.">
        <title>Quantitative phosphoproteomic analysis of T cell receptor signaling reveals system-wide modulation of protein-protein interactions.</title>
        <authorList>
            <person name="Mayya V."/>
            <person name="Lundgren D.H."/>
            <person name="Hwang S.-I."/>
            <person name="Rezaul K."/>
            <person name="Wu L."/>
            <person name="Eng J.K."/>
            <person name="Rodionov V."/>
            <person name="Han D.K."/>
        </authorList>
    </citation>
    <scope>PHOSPHORYLATION [LARGE SCALE ANALYSIS] AT SER-371</scope>
    <scope>IDENTIFICATION BY MASS SPECTROMETRY [LARGE SCALE ANALYSIS]</scope>
    <source>
        <tissue>Leukemic T-cell</tissue>
    </source>
</reference>
<reference key="4">
    <citation type="journal article" date="2013" name="J. Proteome Res.">
        <title>Toward a comprehensive characterization of a human cancer cell phosphoproteome.</title>
        <authorList>
            <person name="Zhou H."/>
            <person name="Di Palma S."/>
            <person name="Preisinger C."/>
            <person name="Peng M."/>
            <person name="Polat A.N."/>
            <person name="Heck A.J."/>
            <person name="Mohammed S."/>
        </authorList>
    </citation>
    <scope>PHOSPHORYLATION [LARGE SCALE ANALYSIS] AT SER-234 AND SER-371</scope>
    <scope>IDENTIFICATION BY MASS SPECTROMETRY [LARGE SCALE ANALYSIS]</scope>
    <source>
        <tissue>Cervix carcinoma</tissue>
        <tissue>Erythroleukemia</tissue>
    </source>
</reference>
<reference key="5">
    <citation type="journal article" date="2015" name="Mol. Cell. Proteomics">
        <title>System-wide analysis of SUMOylation dynamics in response to replication stress reveals novel small ubiquitin-like modified target proteins and acceptor lysines relevant for genome stability.</title>
        <authorList>
            <person name="Xiao Z."/>
            <person name="Chang J.G."/>
            <person name="Hendriks I.A."/>
            <person name="Sigurdsson J.O."/>
            <person name="Olsen J.V."/>
            <person name="Vertegaal A.C."/>
        </authorList>
    </citation>
    <scope>SUMOYLATION [LARGE SCALE ANALYSIS] AT LYS-404</scope>
    <scope>IDENTIFICATION BY MASS SPECTROMETRY [LARGE SCALE ANALYSIS]</scope>
</reference>
<reference key="6">
    <citation type="journal article" date="2017" name="Nat. Struct. Mol. Biol.">
        <title>Site-specific mapping of the human SUMO proteome reveals co-modification with phosphorylation.</title>
        <authorList>
            <person name="Hendriks I.A."/>
            <person name="Lyon D."/>
            <person name="Young C."/>
            <person name="Jensen L.J."/>
            <person name="Vertegaal A.C."/>
            <person name="Nielsen M.L."/>
        </authorList>
    </citation>
    <scope>SUMOYLATION [LARGE SCALE ANALYSIS] AT LYS-239; LYS-322; LYS-330; LYS-404; LYS-415; LYS-541; LYS-594; LYS-597; LYS-645 AND LYS-658</scope>
    <scope>IDENTIFICATION BY MASS SPECTROMETRY [LARGE SCALE ANALYSIS]</scope>
</reference>
<dbReference type="EMBL" id="AB002352">
    <property type="protein sequence ID" value="BAA20811.2"/>
    <property type="status" value="ALT_INIT"/>
    <property type="molecule type" value="mRNA"/>
</dbReference>
<dbReference type="EMBL" id="BC010007">
    <property type="protein sequence ID" value="AAH10007.1"/>
    <property type="molecule type" value="mRNA"/>
</dbReference>
<dbReference type="CCDS" id="CCDS6610.1"/>
<dbReference type="RefSeq" id="NP_055687.1">
    <property type="nucleotide sequence ID" value="NM_014872.3"/>
</dbReference>
<dbReference type="RefSeq" id="XP_005251691.1">
    <property type="nucleotide sequence ID" value="XM_005251634.3"/>
</dbReference>
<dbReference type="RefSeq" id="XP_054220391.1">
    <property type="nucleotide sequence ID" value="XM_054364416.1"/>
</dbReference>
<dbReference type="PDB" id="9B9R">
    <property type="method" value="EM"/>
    <property type="resolution" value="3.70 A"/>
    <property type="chains" value="A/B/C/D=1-124"/>
</dbReference>
<dbReference type="PDBsum" id="9B9R"/>
<dbReference type="EMDB" id="EMD-44389"/>
<dbReference type="SMR" id="O15062"/>
<dbReference type="BioGRID" id="115253">
    <property type="interactions" value="54"/>
</dbReference>
<dbReference type="DIP" id="DIP-41566N"/>
<dbReference type="FunCoup" id="O15062">
    <property type="interactions" value="3245"/>
</dbReference>
<dbReference type="IntAct" id="O15062">
    <property type="interactions" value="35"/>
</dbReference>
<dbReference type="MINT" id="O15062"/>
<dbReference type="STRING" id="9606.ENSP00000307604"/>
<dbReference type="iPTMnet" id="O15062"/>
<dbReference type="PhosphoSitePlus" id="O15062"/>
<dbReference type="BioMuta" id="ZBTB5"/>
<dbReference type="jPOST" id="O15062"/>
<dbReference type="MassIVE" id="O15062"/>
<dbReference type="PaxDb" id="9606-ENSP00000307604"/>
<dbReference type="PeptideAtlas" id="O15062"/>
<dbReference type="ProteomicsDB" id="48414"/>
<dbReference type="Pumba" id="O15062"/>
<dbReference type="Antibodypedia" id="26273">
    <property type="antibodies" value="141 antibodies from 24 providers"/>
</dbReference>
<dbReference type="DNASU" id="9925"/>
<dbReference type="Ensembl" id="ENST00000307750.5">
    <property type="protein sequence ID" value="ENSP00000307604.4"/>
    <property type="gene ID" value="ENSG00000168795.5"/>
</dbReference>
<dbReference type="GeneID" id="9925"/>
<dbReference type="KEGG" id="hsa:9925"/>
<dbReference type="MANE-Select" id="ENST00000307750.5">
    <property type="protein sequence ID" value="ENSP00000307604.4"/>
    <property type="RefSeq nucleotide sequence ID" value="NM_014872.3"/>
    <property type="RefSeq protein sequence ID" value="NP_055687.1"/>
</dbReference>
<dbReference type="AGR" id="HGNC:23836"/>
<dbReference type="CTD" id="9925"/>
<dbReference type="DisGeNET" id="9925"/>
<dbReference type="GeneCards" id="ZBTB5"/>
<dbReference type="HGNC" id="HGNC:23836">
    <property type="gene designation" value="ZBTB5"/>
</dbReference>
<dbReference type="HPA" id="ENSG00000168795">
    <property type="expression patterns" value="Low tissue specificity"/>
</dbReference>
<dbReference type="MIM" id="616590">
    <property type="type" value="gene"/>
</dbReference>
<dbReference type="neXtProt" id="NX_O15062"/>
<dbReference type="OpenTargets" id="ENSG00000168795"/>
<dbReference type="PharmGKB" id="PA134969268"/>
<dbReference type="VEuPathDB" id="HostDB:ENSG00000168795"/>
<dbReference type="eggNOG" id="KOG1721">
    <property type="taxonomic scope" value="Eukaryota"/>
</dbReference>
<dbReference type="GeneTree" id="ENSGT00940000160246"/>
<dbReference type="HOGENOM" id="CLU_407055_0_0_1"/>
<dbReference type="InParanoid" id="O15062"/>
<dbReference type="OMA" id="CRIDNDT"/>
<dbReference type="OrthoDB" id="8117402at2759"/>
<dbReference type="PAN-GO" id="O15062">
    <property type="GO annotations" value="4 GO annotations based on evolutionary models"/>
</dbReference>
<dbReference type="PhylomeDB" id="O15062"/>
<dbReference type="TreeFam" id="TF330979"/>
<dbReference type="PathwayCommons" id="O15062"/>
<dbReference type="SignaLink" id="O15062"/>
<dbReference type="BioGRID-ORCS" id="9925">
    <property type="hits" value="12 hits in 1197 CRISPR screens"/>
</dbReference>
<dbReference type="ChiTaRS" id="ZBTB5">
    <property type="organism name" value="human"/>
</dbReference>
<dbReference type="GenomeRNAi" id="9925"/>
<dbReference type="Pharos" id="O15062">
    <property type="development level" value="Tbio"/>
</dbReference>
<dbReference type="PRO" id="PR:O15062"/>
<dbReference type="Proteomes" id="UP000005640">
    <property type="component" value="Chromosome 9"/>
</dbReference>
<dbReference type="RNAct" id="O15062">
    <property type="molecule type" value="protein"/>
</dbReference>
<dbReference type="Bgee" id="ENSG00000168795">
    <property type="expression patterns" value="Expressed in esophagus squamous epithelium and 180 other cell types or tissues"/>
</dbReference>
<dbReference type="ExpressionAtlas" id="O15062">
    <property type="expression patterns" value="baseline and differential"/>
</dbReference>
<dbReference type="GO" id="GO:0000785">
    <property type="term" value="C:chromatin"/>
    <property type="evidence" value="ECO:0000247"/>
    <property type="project" value="NTNU_SB"/>
</dbReference>
<dbReference type="GO" id="GO:0005634">
    <property type="term" value="C:nucleus"/>
    <property type="evidence" value="ECO:0000314"/>
    <property type="project" value="UniProtKB"/>
</dbReference>
<dbReference type="GO" id="GO:0000981">
    <property type="term" value="F:DNA-binding transcription factor activity, RNA polymerase II-specific"/>
    <property type="evidence" value="ECO:0000247"/>
    <property type="project" value="NTNU_SB"/>
</dbReference>
<dbReference type="GO" id="GO:0001227">
    <property type="term" value="F:DNA-binding transcription repressor activity, RNA polymerase II-specific"/>
    <property type="evidence" value="ECO:0000314"/>
    <property type="project" value="NTNU_SB"/>
</dbReference>
<dbReference type="GO" id="GO:0000977">
    <property type="term" value="F:RNA polymerase II transcription regulatory region sequence-specific DNA binding"/>
    <property type="evidence" value="ECO:0000314"/>
    <property type="project" value="NTNU_SB"/>
</dbReference>
<dbReference type="GO" id="GO:0008270">
    <property type="term" value="F:zinc ion binding"/>
    <property type="evidence" value="ECO:0007669"/>
    <property type="project" value="UniProtKB-KW"/>
</dbReference>
<dbReference type="GO" id="GO:0000122">
    <property type="term" value="P:negative regulation of transcription by RNA polymerase II"/>
    <property type="evidence" value="ECO:0000314"/>
    <property type="project" value="NTNU_SB"/>
</dbReference>
<dbReference type="GO" id="GO:0006357">
    <property type="term" value="P:regulation of transcription by RNA polymerase II"/>
    <property type="evidence" value="ECO:0000318"/>
    <property type="project" value="GO_Central"/>
</dbReference>
<dbReference type="CDD" id="cd18196">
    <property type="entry name" value="BTB_POZ_ZBTB5"/>
    <property type="match status" value="1"/>
</dbReference>
<dbReference type="FunFam" id="3.30.710.10:FF:000061">
    <property type="entry name" value="Zinc finger and BTB domain-containing protein 5"/>
    <property type="match status" value="1"/>
</dbReference>
<dbReference type="FunFam" id="3.30.160.60:FF:000250">
    <property type="entry name" value="zinc finger protein 197 isoform X1"/>
    <property type="match status" value="1"/>
</dbReference>
<dbReference type="Gene3D" id="3.30.160.60">
    <property type="entry name" value="Classic Zinc Finger"/>
    <property type="match status" value="2"/>
</dbReference>
<dbReference type="Gene3D" id="3.30.710.10">
    <property type="entry name" value="Potassium Channel Kv1.1, Chain A"/>
    <property type="match status" value="1"/>
</dbReference>
<dbReference type="InterPro" id="IPR000210">
    <property type="entry name" value="BTB/POZ_dom"/>
</dbReference>
<dbReference type="InterPro" id="IPR011333">
    <property type="entry name" value="SKP1/BTB/POZ_sf"/>
</dbReference>
<dbReference type="InterPro" id="IPR036236">
    <property type="entry name" value="Znf_C2H2_sf"/>
</dbReference>
<dbReference type="InterPro" id="IPR013087">
    <property type="entry name" value="Znf_C2H2_type"/>
</dbReference>
<dbReference type="InterPro" id="IPR050457">
    <property type="entry name" value="ZnFinger_BTB_dom_contain"/>
</dbReference>
<dbReference type="PANTHER" id="PTHR46105">
    <property type="entry name" value="AGAP004733-PA"/>
    <property type="match status" value="1"/>
</dbReference>
<dbReference type="PANTHER" id="PTHR46105:SF28">
    <property type="entry name" value="ZINC FINGER PROTEIN 37-LIKE"/>
    <property type="match status" value="1"/>
</dbReference>
<dbReference type="Pfam" id="PF00651">
    <property type="entry name" value="BTB"/>
    <property type="match status" value="1"/>
</dbReference>
<dbReference type="SMART" id="SM00225">
    <property type="entry name" value="BTB"/>
    <property type="match status" value="1"/>
</dbReference>
<dbReference type="SMART" id="SM00355">
    <property type="entry name" value="ZnF_C2H2"/>
    <property type="match status" value="2"/>
</dbReference>
<dbReference type="SUPFAM" id="SSF57667">
    <property type="entry name" value="beta-beta-alpha zinc fingers"/>
    <property type="match status" value="1"/>
</dbReference>
<dbReference type="SUPFAM" id="SSF54695">
    <property type="entry name" value="POZ domain"/>
    <property type="match status" value="1"/>
</dbReference>
<dbReference type="PROSITE" id="PS50097">
    <property type="entry name" value="BTB"/>
    <property type="match status" value="1"/>
</dbReference>
<dbReference type="PROSITE" id="PS00028">
    <property type="entry name" value="ZINC_FINGER_C2H2_1"/>
    <property type="match status" value="1"/>
</dbReference>
<dbReference type="PROSITE" id="PS50157">
    <property type="entry name" value="ZINC_FINGER_C2H2_2"/>
    <property type="match status" value="2"/>
</dbReference>
<proteinExistence type="evidence at protein level"/>
<organism>
    <name type="scientific">Homo sapiens</name>
    <name type="common">Human</name>
    <dbReference type="NCBI Taxonomy" id="9606"/>
    <lineage>
        <taxon>Eukaryota</taxon>
        <taxon>Metazoa</taxon>
        <taxon>Chordata</taxon>
        <taxon>Craniata</taxon>
        <taxon>Vertebrata</taxon>
        <taxon>Euteleostomi</taxon>
        <taxon>Mammalia</taxon>
        <taxon>Eutheria</taxon>
        <taxon>Euarchontoglires</taxon>
        <taxon>Primates</taxon>
        <taxon>Haplorrhini</taxon>
        <taxon>Catarrhini</taxon>
        <taxon>Hominidae</taxon>
        <taxon>Homo</taxon>
    </lineage>
</organism>
<evidence type="ECO:0000255" key="1">
    <source>
        <dbReference type="PROSITE-ProRule" id="PRU00037"/>
    </source>
</evidence>
<evidence type="ECO:0000255" key="2">
    <source>
        <dbReference type="PROSITE-ProRule" id="PRU00042"/>
    </source>
</evidence>
<evidence type="ECO:0000256" key="3">
    <source>
        <dbReference type="SAM" id="MobiDB-lite"/>
    </source>
</evidence>
<evidence type="ECO:0000305" key="4"/>
<evidence type="ECO:0007744" key="5">
    <source>
    </source>
</evidence>
<evidence type="ECO:0007744" key="6">
    <source>
    </source>
</evidence>
<evidence type="ECO:0007744" key="7">
    <source>
    </source>
</evidence>
<evidence type="ECO:0007744" key="8">
    <source>
    </source>
</evidence>
<comment type="function">
    <text>May be involved in transcriptional regulation.</text>
</comment>
<comment type="interaction">
    <interactant intactId="EBI-722671">
        <id>O15062</id>
    </interactant>
    <interactant intactId="EBI-2949658">
        <id>O95429</id>
        <label>BAG4</label>
    </interactant>
    <organismsDiffer>false</organismsDiffer>
    <experiments>3</experiments>
</comment>
<comment type="interaction">
    <interactant intactId="EBI-722671">
        <id>O15062</id>
    </interactant>
    <interactant intactId="EBI-8646694">
        <id>O43602</id>
        <label>DCX</label>
    </interactant>
    <organismsDiffer>false</organismsDiffer>
    <experiments>4</experiments>
</comment>
<comment type="interaction">
    <interactant intactId="EBI-722671">
        <id>O15062</id>
    </interactant>
    <interactant intactId="EBI-14148644">
        <id>O43602-2</id>
        <label>DCX</label>
    </interactant>
    <organismsDiffer>false</organismsDiffer>
    <experiments>3</experiments>
</comment>
<comment type="interaction">
    <interactant intactId="EBI-722671">
        <id>O15062</id>
    </interactant>
    <interactant intactId="EBI-12360031">
        <id>Q9NRN9</id>
        <label>METTL5</label>
    </interactant>
    <organismsDiffer>false</organismsDiffer>
    <experiments>3</experiments>
</comment>
<comment type="interaction">
    <interactant intactId="EBI-722671">
        <id>O15062</id>
    </interactant>
    <interactant intactId="EBI-310749">
        <id>Q9UH65</id>
        <label>SWAP70</label>
    </interactant>
    <organismsDiffer>false</organismsDiffer>
    <experiments>3</experiments>
</comment>
<comment type="interaction">
    <interactant intactId="EBI-722671">
        <id>O15062</id>
    </interactant>
    <interactant intactId="EBI-740434">
        <id>O15156</id>
        <label>ZBTB7B</label>
    </interactant>
    <organismsDiffer>false</organismsDiffer>
    <experiments>3</experiments>
</comment>
<comment type="interaction">
    <interactant intactId="EBI-722671">
        <id>O15062</id>
    </interactant>
    <interactant intactId="EBI-11522250">
        <id>O15156-2</id>
        <label>ZBTB7B</label>
    </interactant>
    <organismsDiffer>false</organismsDiffer>
    <experiments>3</experiments>
</comment>
<comment type="subcellular location">
    <subcellularLocation>
        <location evidence="4">Nucleus</location>
    </subcellularLocation>
</comment>
<comment type="sequence caution" evidence="4">
    <conflict type="erroneous initiation">
        <sequence resource="EMBL-CDS" id="BAA20811"/>
    </conflict>
</comment>
<sequence length="677" mass="74278">MDFPGHFEQIFQQLNYQRLHGQLCDCVIVVGNRHFKAHRSVLAACSTHFRALFSVAEGDQTMNMIQLDSEVVTAEAFAALIDMMYTSTLMLGESNVMDVLLAASHLHLNSVVKACKHYLTTRTLPMSPPSERVQEQSARMQRSFMLQQLGLSIVSSALNSSQNGEEQPAPMSSSMRSNLDQRTPFPMRRLHKRKQSAEERARQRLRPSIDESAISDVTPENGPSGVHSREEFFSPDSLKIVDNPKADGMTDNQEDSAIMFDQSFGTQEDAQVPSQSDNSAGNMAQLSMASRATQVETSFDQEAAPEKSSFQCENPEVGLGEKEHMRVVVKSEPLSSPEPQDEVSDVTSQAEGSESVEVEGVVVSAEKIDLSPESSDRSFSDPQSSTDRVGDIHILEVTNNLEHKSTFSISNFLNKSRGNNFTANQNNDDNIPNTTSDCRLESEAPYLLSPEAGPAGGPSSAPGSHVENPFSEPADSHFVRPMQEVMGLPCVQTSGYQGGEQFGMDFSRSGLGLHSSFSRVMIGSPRGGASNFPYYRRIAPKMPVVTSVRSSQIPENSTSSQLMMNGATSSFENGHPSQPGPPQLTRASADVLSKCKKALSEHNVLVVEGARKYACKICCKTFLTLTDCKKHIRVHTGEKPYACLKCGKRFSQSSHLYKHSKTTCLRWQSSNLPSTLL</sequence>
<keyword id="KW-0002">3D-structure</keyword>
<keyword id="KW-0238">DNA-binding</keyword>
<keyword id="KW-1017">Isopeptide bond</keyword>
<keyword id="KW-0479">Metal-binding</keyword>
<keyword id="KW-0539">Nucleus</keyword>
<keyword id="KW-0597">Phosphoprotein</keyword>
<keyword id="KW-1267">Proteomics identification</keyword>
<keyword id="KW-1185">Reference proteome</keyword>
<keyword id="KW-0677">Repeat</keyword>
<keyword id="KW-0804">Transcription</keyword>
<keyword id="KW-0805">Transcription regulation</keyword>
<keyword id="KW-0832">Ubl conjugation</keyword>
<keyword id="KW-0862">Zinc</keyword>
<keyword id="KW-0863">Zinc-finger</keyword>
<name>ZBTB5_HUMAN</name>
<feature type="chain" id="PRO_0000047713" description="Zinc finger and BTB domain-containing protein 5">
    <location>
        <begin position="1"/>
        <end position="677"/>
    </location>
</feature>
<feature type="domain" description="BTB" evidence="1">
    <location>
        <begin position="24"/>
        <end position="93"/>
    </location>
</feature>
<feature type="zinc finger region" description="C2H2-type 1" evidence="2">
    <location>
        <begin position="613"/>
        <end position="635"/>
    </location>
</feature>
<feature type="zinc finger region" description="C2H2-type 2; atypical" evidence="2">
    <location>
        <begin position="641"/>
        <end position="664"/>
    </location>
</feature>
<feature type="region of interest" description="Disordered" evidence="3">
    <location>
        <begin position="158"/>
        <end position="252"/>
    </location>
</feature>
<feature type="region of interest" description="Disordered" evidence="3">
    <location>
        <begin position="287"/>
        <end position="312"/>
    </location>
</feature>
<feature type="region of interest" description="Disordered" evidence="3">
    <location>
        <begin position="331"/>
        <end position="387"/>
    </location>
</feature>
<feature type="region of interest" description="Disordered" evidence="3">
    <location>
        <begin position="447"/>
        <end position="474"/>
    </location>
</feature>
<feature type="region of interest" description="Disordered" evidence="3">
    <location>
        <begin position="552"/>
        <end position="585"/>
    </location>
</feature>
<feature type="compositionally biased region" description="Polar residues" evidence="3">
    <location>
        <begin position="158"/>
        <end position="181"/>
    </location>
</feature>
<feature type="compositionally biased region" description="Polar residues" evidence="3">
    <location>
        <begin position="287"/>
        <end position="300"/>
    </location>
</feature>
<feature type="compositionally biased region" description="Low complexity" evidence="3">
    <location>
        <begin position="350"/>
        <end position="365"/>
    </location>
</feature>
<feature type="compositionally biased region" description="Basic and acidic residues" evidence="3">
    <location>
        <begin position="366"/>
        <end position="379"/>
    </location>
</feature>
<feature type="compositionally biased region" description="Low complexity" evidence="3">
    <location>
        <begin position="449"/>
        <end position="464"/>
    </location>
</feature>
<feature type="compositionally biased region" description="Polar residues" evidence="3">
    <location>
        <begin position="552"/>
        <end position="576"/>
    </location>
</feature>
<feature type="modified residue" description="Phosphoserine" evidence="6">
    <location>
        <position position="234"/>
    </location>
</feature>
<feature type="modified residue" description="Phosphoserine" evidence="5 6">
    <location>
        <position position="371"/>
    </location>
</feature>
<feature type="cross-link" description="Glycyl lysine isopeptide (Lys-Gly) (interchain with G-Cter in SUMO2)" evidence="8">
    <location>
        <position position="239"/>
    </location>
</feature>
<feature type="cross-link" description="Glycyl lysine isopeptide (Lys-Gly) (interchain with G-Cter in SUMO2)" evidence="8">
    <location>
        <position position="322"/>
    </location>
</feature>
<feature type="cross-link" description="Glycyl lysine isopeptide (Lys-Gly) (interchain with G-Cter in SUMO2)" evidence="8">
    <location>
        <position position="330"/>
    </location>
</feature>
<feature type="cross-link" description="Glycyl lysine isopeptide (Lys-Gly) (interchain with G-Cter in SUMO2)" evidence="7 8">
    <location>
        <position position="404"/>
    </location>
</feature>
<feature type="cross-link" description="Glycyl lysine isopeptide (Lys-Gly) (interchain with G-Cter in SUMO2)" evidence="8">
    <location>
        <position position="415"/>
    </location>
</feature>
<feature type="cross-link" description="Glycyl lysine isopeptide (Lys-Gly) (interchain with G-Cter in SUMO2)" evidence="8">
    <location>
        <position position="541"/>
    </location>
</feature>
<feature type="cross-link" description="Glycyl lysine isopeptide (Lys-Gly) (interchain with G-Cter in SUMO2)" evidence="8">
    <location>
        <position position="594"/>
    </location>
</feature>
<feature type="cross-link" description="Glycyl lysine isopeptide (Lys-Gly) (interchain with G-Cter in SUMO2)" evidence="8">
    <location>
        <position position="597"/>
    </location>
</feature>
<feature type="cross-link" description="Glycyl lysine isopeptide (Lys-Gly) (interchain with G-Cter in SUMO2)" evidence="8">
    <location>
        <position position="645"/>
    </location>
</feature>
<feature type="cross-link" description="Glycyl lysine isopeptide (Lys-Gly) (interchain with G-Cter in SUMO2)" evidence="8">
    <location>
        <position position="658"/>
    </location>
</feature>
<feature type="sequence variant" id="VAR_052915" description="In dbSNP:rs17502738.">
    <original>D</original>
    <variation>G</variation>
    <location>
        <position position="300"/>
    </location>
</feature>
<accession>O15062</accession>
<protein>
    <recommendedName>
        <fullName>Zinc finger and BTB domain-containing protein 5</fullName>
    </recommendedName>
</protein>